<accession>P0DG26</accession>
<accession>Q8K5J2</accession>
<gene>
    <name evidence="1" type="primary">argS</name>
    <name type="ordered locus">SpyM3_1809</name>
</gene>
<comment type="catalytic activity">
    <reaction evidence="1">
        <text>tRNA(Arg) + L-arginine + ATP = L-arginyl-tRNA(Arg) + AMP + diphosphate</text>
        <dbReference type="Rhea" id="RHEA:20301"/>
        <dbReference type="Rhea" id="RHEA-COMP:9658"/>
        <dbReference type="Rhea" id="RHEA-COMP:9673"/>
        <dbReference type="ChEBI" id="CHEBI:30616"/>
        <dbReference type="ChEBI" id="CHEBI:32682"/>
        <dbReference type="ChEBI" id="CHEBI:33019"/>
        <dbReference type="ChEBI" id="CHEBI:78442"/>
        <dbReference type="ChEBI" id="CHEBI:78513"/>
        <dbReference type="ChEBI" id="CHEBI:456215"/>
        <dbReference type="EC" id="6.1.1.19"/>
    </reaction>
</comment>
<comment type="subunit">
    <text evidence="1">Monomer.</text>
</comment>
<comment type="subcellular location">
    <subcellularLocation>
        <location evidence="1">Cytoplasm</location>
    </subcellularLocation>
</comment>
<comment type="similarity">
    <text evidence="1">Belongs to the class-I aminoacyl-tRNA synthetase family.</text>
</comment>
<feature type="chain" id="PRO_0000151621" description="Arginine--tRNA ligase">
    <location>
        <begin position="1"/>
        <end position="563"/>
    </location>
</feature>
<feature type="short sequence motif" description="'HIGH' region">
    <location>
        <begin position="121"/>
        <end position="131"/>
    </location>
</feature>
<reference key="1">
    <citation type="journal article" date="2002" name="Proc. Natl. Acad. Sci. U.S.A.">
        <title>Genome sequence of a serotype M3 strain of group A Streptococcus: phage-encoded toxins, the high-virulence phenotype, and clone emergence.</title>
        <authorList>
            <person name="Beres S.B."/>
            <person name="Sylva G.L."/>
            <person name="Barbian K.D."/>
            <person name="Lei B."/>
            <person name="Hoff J.S."/>
            <person name="Mammarella N.D."/>
            <person name="Liu M.-Y."/>
            <person name="Smoot J.C."/>
            <person name="Porcella S.F."/>
            <person name="Parkins L.D."/>
            <person name="Campbell D.S."/>
            <person name="Smith T.M."/>
            <person name="McCormick J.K."/>
            <person name="Leung D.Y.M."/>
            <person name="Schlievert P.M."/>
            <person name="Musser J.M."/>
        </authorList>
    </citation>
    <scope>NUCLEOTIDE SEQUENCE [LARGE SCALE GENOMIC DNA]</scope>
    <source>
        <strain>ATCC BAA-595 / MGAS315</strain>
    </source>
</reference>
<protein>
    <recommendedName>
        <fullName evidence="1">Arginine--tRNA ligase</fullName>
        <ecNumber evidence="1">6.1.1.19</ecNumber>
    </recommendedName>
    <alternativeName>
        <fullName evidence="1">Arginyl-tRNA synthetase</fullName>
        <shortName evidence="1">ArgRS</shortName>
    </alternativeName>
</protein>
<proteinExistence type="inferred from homology"/>
<evidence type="ECO:0000255" key="1">
    <source>
        <dbReference type="HAMAP-Rule" id="MF_00123"/>
    </source>
</evidence>
<keyword id="KW-0030">Aminoacyl-tRNA synthetase</keyword>
<keyword id="KW-0067">ATP-binding</keyword>
<keyword id="KW-0963">Cytoplasm</keyword>
<keyword id="KW-0436">Ligase</keyword>
<keyword id="KW-0547">Nucleotide-binding</keyword>
<keyword id="KW-0648">Protein biosynthesis</keyword>
<dbReference type="EC" id="6.1.1.19" evidence="1"/>
<dbReference type="EMBL" id="AE014074">
    <property type="protein sequence ID" value="AAM80416.1"/>
    <property type="molecule type" value="Genomic_DNA"/>
</dbReference>
<dbReference type="RefSeq" id="WP_011055093.1">
    <property type="nucleotide sequence ID" value="NC_004070.1"/>
</dbReference>
<dbReference type="SMR" id="P0DG26"/>
<dbReference type="KEGG" id="spg:SpyM3_1809"/>
<dbReference type="HOGENOM" id="CLU_006406_6_1_9"/>
<dbReference type="Proteomes" id="UP000000564">
    <property type="component" value="Chromosome"/>
</dbReference>
<dbReference type="GO" id="GO:0005737">
    <property type="term" value="C:cytoplasm"/>
    <property type="evidence" value="ECO:0007669"/>
    <property type="project" value="UniProtKB-SubCell"/>
</dbReference>
<dbReference type="GO" id="GO:0004814">
    <property type="term" value="F:arginine-tRNA ligase activity"/>
    <property type="evidence" value="ECO:0007669"/>
    <property type="project" value="UniProtKB-UniRule"/>
</dbReference>
<dbReference type="GO" id="GO:0005524">
    <property type="term" value="F:ATP binding"/>
    <property type="evidence" value="ECO:0007669"/>
    <property type="project" value="UniProtKB-UniRule"/>
</dbReference>
<dbReference type="GO" id="GO:0006420">
    <property type="term" value="P:arginyl-tRNA aminoacylation"/>
    <property type="evidence" value="ECO:0007669"/>
    <property type="project" value="UniProtKB-UniRule"/>
</dbReference>
<dbReference type="CDD" id="cd07956">
    <property type="entry name" value="Anticodon_Ia_Arg"/>
    <property type="match status" value="1"/>
</dbReference>
<dbReference type="CDD" id="cd00671">
    <property type="entry name" value="ArgRS_core"/>
    <property type="match status" value="1"/>
</dbReference>
<dbReference type="FunFam" id="3.40.50.620:FF:000116">
    <property type="entry name" value="Arginine--tRNA ligase"/>
    <property type="match status" value="1"/>
</dbReference>
<dbReference type="FunFam" id="1.10.730.10:FF:000006">
    <property type="entry name" value="Arginyl-tRNA synthetase 2, mitochondrial"/>
    <property type="match status" value="1"/>
</dbReference>
<dbReference type="Gene3D" id="3.30.1360.70">
    <property type="entry name" value="Arginyl tRNA synthetase N-terminal domain"/>
    <property type="match status" value="1"/>
</dbReference>
<dbReference type="Gene3D" id="3.40.50.620">
    <property type="entry name" value="HUPs"/>
    <property type="match status" value="1"/>
</dbReference>
<dbReference type="Gene3D" id="1.10.730.10">
    <property type="entry name" value="Isoleucyl-tRNA Synthetase, Domain 1"/>
    <property type="match status" value="1"/>
</dbReference>
<dbReference type="HAMAP" id="MF_00123">
    <property type="entry name" value="Arg_tRNA_synth"/>
    <property type="match status" value="1"/>
</dbReference>
<dbReference type="InterPro" id="IPR001278">
    <property type="entry name" value="Arg-tRNA-ligase"/>
</dbReference>
<dbReference type="InterPro" id="IPR005148">
    <property type="entry name" value="Arg-tRNA-synth_N"/>
</dbReference>
<dbReference type="InterPro" id="IPR036695">
    <property type="entry name" value="Arg-tRNA-synth_N_sf"/>
</dbReference>
<dbReference type="InterPro" id="IPR035684">
    <property type="entry name" value="ArgRS_core"/>
</dbReference>
<dbReference type="InterPro" id="IPR008909">
    <property type="entry name" value="DALR_anticod-bd"/>
</dbReference>
<dbReference type="InterPro" id="IPR014729">
    <property type="entry name" value="Rossmann-like_a/b/a_fold"/>
</dbReference>
<dbReference type="InterPro" id="IPR009080">
    <property type="entry name" value="tRNAsynth_Ia_anticodon-bd"/>
</dbReference>
<dbReference type="NCBIfam" id="TIGR00456">
    <property type="entry name" value="argS"/>
    <property type="match status" value="1"/>
</dbReference>
<dbReference type="PANTHER" id="PTHR11956:SF5">
    <property type="entry name" value="ARGININE--TRNA LIGASE, CYTOPLASMIC"/>
    <property type="match status" value="1"/>
</dbReference>
<dbReference type="PANTHER" id="PTHR11956">
    <property type="entry name" value="ARGINYL-TRNA SYNTHETASE"/>
    <property type="match status" value="1"/>
</dbReference>
<dbReference type="Pfam" id="PF03485">
    <property type="entry name" value="Arg_tRNA_synt_N"/>
    <property type="match status" value="1"/>
</dbReference>
<dbReference type="Pfam" id="PF05746">
    <property type="entry name" value="DALR_1"/>
    <property type="match status" value="1"/>
</dbReference>
<dbReference type="Pfam" id="PF00750">
    <property type="entry name" value="tRNA-synt_1d"/>
    <property type="match status" value="1"/>
</dbReference>
<dbReference type="PRINTS" id="PR01038">
    <property type="entry name" value="TRNASYNTHARG"/>
</dbReference>
<dbReference type="SMART" id="SM01016">
    <property type="entry name" value="Arg_tRNA_synt_N"/>
    <property type="match status" value="1"/>
</dbReference>
<dbReference type="SMART" id="SM00836">
    <property type="entry name" value="DALR_1"/>
    <property type="match status" value="1"/>
</dbReference>
<dbReference type="SUPFAM" id="SSF47323">
    <property type="entry name" value="Anticodon-binding domain of a subclass of class I aminoacyl-tRNA synthetases"/>
    <property type="match status" value="1"/>
</dbReference>
<dbReference type="SUPFAM" id="SSF55190">
    <property type="entry name" value="Arginyl-tRNA synthetase (ArgRS), N-terminal 'additional' domain"/>
    <property type="match status" value="1"/>
</dbReference>
<dbReference type="SUPFAM" id="SSF52374">
    <property type="entry name" value="Nucleotidylyl transferase"/>
    <property type="match status" value="1"/>
</dbReference>
<name>SYR_STRP3</name>
<sequence>MDTKTLIASEIAKVVPELEQDAIFNLLETPKNSDMGDLAFPAFSLAKVLRKAPQMIASELAEQIDESQFEKVVAVGPYINFFLDKAKISSQVLEQVITAGSDYAQQDEGQGRNVAIDMSSPNIAKPFSIGHLRSTVIGDSLAHIFAKMGYKPVKINHLGDWGKQFGMLIVAYKKWGDEAAVQAHPIDELLKLYVRINAEAETDPTVDEEAREWFRKLEDGDKEATELWQWFRDESLLEFNRLYDQLHVTFDSYNGEAFYNDKMDEVLELLEAKNLLVESKGAQVVNLEKYGIEHPALIKKSDGATLYITRDLAAALYRKRTYDFAKSVYVVGNEQAAHFKQLKAVLKEMGYDWSDDMTHVAFGLVTKGGAKLSTRKGNVILLEPTVAEAINRAASQIEAKNPNLADKEAVAHAVGVGAIKFYDLKTDRMNGYDFDLEAMVSFEGETGPYVQYAHARIQSILRKADFTPSATTTYSLADAESWEIIKLIQDFPRIIKRTSDNFEPSIMAKFAINLAQSFNKYYAHTRILDDNSERDNRLALCYATATVLKEALRLLGVDAPNEM</sequence>
<organism>
    <name type="scientific">Streptococcus pyogenes serotype M3 (strain ATCC BAA-595 / MGAS315)</name>
    <dbReference type="NCBI Taxonomy" id="198466"/>
    <lineage>
        <taxon>Bacteria</taxon>
        <taxon>Bacillati</taxon>
        <taxon>Bacillota</taxon>
        <taxon>Bacilli</taxon>
        <taxon>Lactobacillales</taxon>
        <taxon>Streptococcaceae</taxon>
        <taxon>Streptococcus</taxon>
    </lineage>
</organism>